<gene>
    <name evidence="12" type="ORF">TGME49_269000</name>
</gene>
<keyword id="KW-0067">ATP-binding</keyword>
<keyword id="KW-0378">Hydrolase</keyword>
<keyword id="KW-0472">Membrane</keyword>
<keyword id="KW-0496">Mitochondrion</keyword>
<keyword id="KW-0547">Nucleotide-binding</keyword>
<keyword id="KW-1185">Reference proteome</keyword>
<keyword id="KW-0809">Transit peptide</keyword>
<keyword id="KW-1278">Translocase</keyword>
<keyword id="KW-0812">Transmembrane</keyword>
<keyword id="KW-1133">Transmembrane helix</keyword>
<keyword id="KW-0813">Transport</keyword>
<comment type="function">
    <text evidence="6 7 8 9">Probably transports iron-sulfur clusters in an ATP-dependent manner (PubMed:39207139, PubMed:39348385). Plays a role in [Fe-S] proteins homeostasis (PubMed:39207139, PubMed:39348385). Required for optimal parasite growth and lytic cycle (PubMed:39207139, PubMed:39348385).</text>
</comment>
<comment type="subunit">
    <text evidence="6 7">Homodimer.</text>
</comment>
<comment type="subcellular location">
    <subcellularLocation>
        <location evidence="6 11">Mitochondrion membrane</location>
        <topology evidence="2">Multi-pass membrane protein</topology>
    </subcellularLocation>
</comment>
<comment type="disruption phenotype">
    <text evidence="6 7">Conditional knockdown results in reduced formation of plaques (PubMed:39207139, PubMed:39348385). Subtle but significant growth defects in parasites (PubMed:39207139, PubMed:39348385). Reduced number of parasites per vacuole (PubMed:39207139, PubMed:39348385). Partial conversion into bradyzoites (PubMed:39207139). Altered levels of iron-sulfur cluster proteins (PubMed:39207139, PubMed:39348385). Global decrease in cytosolic translation (PubMed:39207139). No significant effects on mitochondrial morphology and function (PubMed:39207139, PubMed:39348385).</text>
</comment>
<comment type="similarity">
    <text evidence="10">Belongs to the ABC transporter superfamily. ABCB family. Heavy Metal importer (TC 3.A.1.210) subfamily.</text>
</comment>
<name>ATM1_TOXGM</name>
<feature type="transit peptide" description="Mitochondrion" evidence="2">
    <location>
        <begin position="1"/>
        <end position="65"/>
    </location>
</feature>
<feature type="chain" id="PRO_0000461954" description="ABC transporter ATM1" evidence="2">
    <location>
        <begin position="66"/>
        <end position="1130"/>
    </location>
</feature>
<feature type="transmembrane region" description="Helical" evidence="2">
    <location>
        <begin position="406"/>
        <end position="426"/>
    </location>
</feature>
<feature type="transmembrane region" description="Helical" evidence="2">
    <location>
        <begin position="574"/>
        <end position="594"/>
    </location>
</feature>
<feature type="transmembrane region" description="Helical" evidence="2 4">
    <location>
        <begin position="653"/>
        <end position="673"/>
    </location>
</feature>
<feature type="transmembrane region" description="Helical" evidence="2 4">
    <location>
        <begin position="678"/>
        <end position="698"/>
    </location>
</feature>
<feature type="transmembrane region" description="Helical" evidence="2 4">
    <location>
        <begin position="761"/>
        <end position="781"/>
    </location>
</feature>
<feature type="transmembrane region" description="Helical" evidence="2 4">
    <location>
        <begin position="791"/>
        <end position="811"/>
    </location>
</feature>
<feature type="domain" description="ABC transmembrane type-1" evidence="4">
    <location>
        <begin position="587"/>
        <end position="823"/>
    </location>
</feature>
<feature type="domain" description="ABC transporter" evidence="3">
    <location>
        <begin position="857"/>
        <end position="1111"/>
    </location>
</feature>
<feature type="region of interest" description="Disordered" evidence="5">
    <location>
        <begin position="191"/>
        <end position="212"/>
    </location>
</feature>
<feature type="region of interest" description="Disordered" evidence="5">
    <location>
        <begin position="276"/>
        <end position="315"/>
    </location>
</feature>
<feature type="region of interest" description="Disordered" evidence="5">
    <location>
        <begin position="341"/>
        <end position="385"/>
    </location>
</feature>
<feature type="region of interest" description="Disordered" evidence="5">
    <location>
        <begin position="468"/>
        <end position="554"/>
    </location>
</feature>
<feature type="compositionally biased region" description="Polar residues" evidence="5">
    <location>
        <begin position="195"/>
        <end position="206"/>
    </location>
</feature>
<feature type="compositionally biased region" description="Polar residues" evidence="5">
    <location>
        <begin position="305"/>
        <end position="315"/>
    </location>
</feature>
<feature type="compositionally biased region" description="Low complexity" evidence="5">
    <location>
        <begin position="468"/>
        <end position="502"/>
    </location>
</feature>
<feature type="compositionally biased region" description="Basic and acidic residues" evidence="5">
    <location>
        <begin position="503"/>
        <end position="523"/>
    </location>
</feature>
<feature type="binding site" evidence="3">
    <location>
        <begin position="910"/>
        <end position="917"/>
    </location>
    <ligand>
        <name>ATP</name>
        <dbReference type="ChEBI" id="CHEBI:30616"/>
    </ligand>
</feature>
<proteinExistence type="evidence at protein level"/>
<sequence length="1130" mass="120686">MQPPTRAPFFPFSLLRGRKARETCTCRSVASTEGPNTFGPRARPGCHAHQVAPSKESFHSSAFQLVSASRLSPLMSSCFVSFLRYPSFRPSAPFSAPPSSSTVPISTPSDFSHSAPASWRCVPTAPSALHAPFSFTTQAAHLSSCVFDGCSRLPCSEPGSPQTLQRALATTSATAFLRTACMSHRLRRRPDAWTSGCSGQTDNATASPCVRPLLRPPVDTASRAAANDKDAPQPTCFWRNARTSRAVHRNQTDMNFSSFSCSLRPCRHTLAKAAGHHAPLSRHSLQSLPESRIRGGTVSRGDSPGSLTLSPRNMSSDAMPVHPLYFPSAVPFSTTSGSNSSTFSCPSPSSSTSSTSSTSSTSSTSSTSSTSSTSSTSSTSSTSSPFLLSRSHSVDCRACPVSRAPPNPTSLQLLFSLFPFLWPTALKDRLRVLGSVACLVTAKVLTIQAPLLLANLVDAFQVLPHNSPLSPSGASPSSGDTSLLASSGETSSSLSPSAAPAEGAREAGKSGESAGRERRDEGSTVRLSPLAEGPASPATEERTAAGKAGTSVGGRDAGAVHALDTEHLRNTAQIVSVPLGVVCGFPVARIAATGFNELRSTLFTRVSQNASCDFSCHAFLHLHALALFHDKRAGELSVLISRGMKSVTALLNVLLFQMVPTALEFALVLYLLGSKVGGPVACITSLTMAVYVAFTAAVTARRTKIRKEMIAAEQQSVGLLVDSLANAEAVRFFTAEKGELSRFEAVQRRYAEKHVSVNQSLAFLNFGQQLIFNVGVLGSLAYTASQVAAGLLPVGHIVLVSSLLLQLAVPLNFVGTIYRETSLNLADLEKLYELMNHHPPIVNPPDARPFVLKGGAVAFENVRFAYPPSPLRPGSLPSKTGDDEKPEASRMLLDDVSFSVDAGKKVAIVGPSGVGKSTLIKLLFRMFDPASGTVRIDDQDVKELDLHSFRRQIGVVPQDMVLFNDTIEFNIKYGCPSATDEEMRAAAKQAEIDDVIMRMPQGYSTVVGERGLKLSGGERQRIGIARCLLRNPAIAVFDEATSALDSHTEQKILKAFRAMARGRTTLVIAHRLSTISDADKIIYLKEGKIAEMGTHAELLEKERGLYRALWESQQHQEQEEAVSTPDLTLS</sequence>
<reference evidence="13" key="1">
    <citation type="submission" date="2013-04" db="EMBL/GenBank/DDBJ databases">
        <authorList>
            <person name="Sibley D."/>
            <person name="Venepally P."/>
            <person name="Karamycheva S."/>
            <person name="Hadjithomas M."/>
            <person name="Khan A."/>
            <person name="Brunk B."/>
            <person name="Roos D."/>
            <person name="Caler E."/>
            <person name="Lorenzi H."/>
        </authorList>
    </citation>
    <scope>NUCLEOTIDE SEQUENCE [LARGE SCALE GENOMIC DNA]</scope>
    <source>
        <strain evidence="13">ATCC 50611 / Me49</strain>
    </source>
</reference>
<reference evidence="10" key="2">
    <citation type="journal article" date="2024" name="MBio">
        <title>The Toxoplasma gondii mitochondrial transporter ABCB7L is essential for the biogenesis of cytosolic and nuclear iron-sulfur cluster proteins and cytosolic translation.</title>
        <authorList>
            <person name="Maclean A.E."/>
            <person name="Sloan M.A."/>
            <person name="Renaud E.A."/>
            <person name="Argyle B.E."/>
            <person name="Lewis W.H."/>
            <person name="Ovciarikova J."/>
            <person name="Demolombe V."/>
            <person name="Waller R.F."/>
            <person name="Besteiro S."/>
            <person name="Sheiner L."/>
        </authorList>
    </citation>
    <scope>FUNCTION</scope>
    <scope>SUBUNIT</scope>
    <scope>SUBCELLULAR LOCATION</scope>
    <scope>DISRUPTION PHENOTYPE</scope>
</reference>
<reference evidence="10" key="3">
    <citation type="journal article" date="2024" name="PLoS Pathog.">
        <title>ATM1, an essential conserved transporter in Apicomplexa, bridges mitochondrial and cytosolic [Fe-S] biogenesis.</title>
        <authorList>
            <person name="Shrivastava D."/>
            <person name="Abboud E."/>
            <person name="Ramchandra J.P."/>
            <person name="Jha A."/>
            <person name="Marq J.B."/>
            <person name="Chaurasia A."/>
            <person name="Mitra K."/>
            <person name="Sadik M."/>
            <person name="Siddiqi M.I."/>
            <person name="Soldati-Favre D."/>
            <person name="Kloehn J."/>
            <person name="Habib S."/>
        </authorList>
    </citation>
    <scope>FUNCTION</scope>
    <scope>SUBUNIT</scope>
    <scope>SUBCELLULAR LOCATION</scope>
    <scope>DISRUPTION PHENOTYPE</scope>
</reference>
<dbReference type="EC" id="7.-.-.-" evidence="1"/>
<dbReference type="EMBL" id="KE138831">
    <property type="protein sequence ID" value="EPT28291.1"/>
    <property type="molecule type" value="Genomic_DNA"/>
</dbReference>
<dbReference type="RefSeq" id="XP_002365593.2">
    <property type="nucleotide sequence ID" value="XM_002365552.2"/>
</dbReference>
<dbReference type="EnsemblProtists" id="TGME49_269000-t26_1">
    <property type="protein sequence ID" value="TGME49_269000-t26_1"/>
    <property type="gene ID" value="TGME49_269000"/>
</dbReference>
<dbReference type="GeneID" id="7894574"/>
<dbReference type="KEGG" id="tgo:TGME49_269000"/>
<dbReference type="VEuPathDB" id="ToxoDB:TGME49_269000"/>
<dbReference type="OrthoDB" id="2876209at2759"/>
<dbReference type="Proteomes" id="UP000001529">
    <property type="component" value="Chromosome VIII"/>
</dbReference>
<dbReference type="GO" id="GO:0005743">
    <property type="term" value="C:mitochondrial inner membrane"/>
    <property type="evidence" value="ECO:0007669"/>
    <property type="project" value="TreeGrafter"/>
</dbReference>
<dbReference type="GO" id="GO:0140359">
    <property type="term" value="F:ABC-type transporter activity"/>
    <property type="evidence" value="ECO:0007669"/>
    <property type="project" value="InterPro"/>
</dbReference>
<dbReference type="GO" id="GO:0005524">
    <property type="term" value="F:ATP binding"/>
    <property type="evidence" value="ECO:0007669"/>
    <property type="project" value="UniProtKB-KW"/>
</dbReference>
<dbReference type="GO" id="GO:0016887">
    <property type="term" value="F:ATP hydrolysis activity"/>
    <property type="evidence" value="ECO:0007669"/>
    <property type="project" value="InterPro"/>
</dbReference>
<dbReference type="GO" id="GO:0006879">
    <property type="term" value="P:intracellular iron ion homeostasis"/>
    <property type="evidence" value="ECO:0007669"/>
    <property type="project" value="TreeGrafter"/>
</dbReference>
<dbReference type="CDD" id="cd18582">
    <property type="entry name" value="ABC_6TM_ATM1_ABCB7"/>
    <property type="match status" value="1"/>
</dbReference>
<dbReference type="CDD" id="cd03253">
    <property type="entry name" value="ABCC_ATM1_transporter"/>
    <property type="match status" value="1"/>
</dbReference>
<dbReference type="FunFam" id="3.40.50.300:FF:000287">
    <property type="entry name" value="Multidrug ABC transporter ATP-binding protein"/>
    <property type="match status" value="1"/>
</dbReference>
<dbReference type="Gene3D" id="1.20.1560.10">
    <property type="entry name" value="ABC transporter type 1, transmembrane domain"/>
    <property type="match status" value="1"/>
</dbReference>
<dbReference type="Gene3D" id="3.40.50.300">
    <property type="entry name" value="P-loop containing nucleotide triphosphate hydrolases"/>
    <property type="match status" value="1"/>
</dbReference>
<dbReference type="InterPro" id="IPR003593">
    <property type="entry name" value="AAA+_ATPase"/>
</dbReference>
<dbReference type="InterPro" id="IPR011527">
    <property type="entry name" value="ABC1_TM_dom"/>
</dbReference>
<dbReference type="InterPro" id="IPR036640">
    <property type="entry name" value="ABC1_TM_sf"/>
</dbReference>
<dbReference type="InterPro" id="IPR003439">
    <property type="entry name" value="ABC_transporter-like_ATP-bd"/>
</dbReference>
<dbReference type="InterPro" id="IPR017871">
    <property type="entry name" value="ABC_transporter-like_CS"/>
</dbReference>
<dbReference type="InterPro" id="IPR027417">
    <property type="entry name" value="P-loop_NTPase"/>
</dbReference>
<dbReference type="InterPro" id="IPR039421">
    <property type="entry name" value="Type_1_exporter"/>
</dbReference>
<dbReference type="PANTHER" id="PTHR24221">
    <property type="entry name" value="ATP-BINDING CASSETTE SUB-FAMILY B"/>
    <property type="match status" value="1"/>
</dbReference>
<dbReference type="PANTHER" id="PTHR24221:SF402">
    <property type="entry name" value="IRON-SULFUR CLUSTERS TRANSPORTER ABCB7, MITOCHONDRIAL"/>
    <property type="match status" value="1"/>
</dbReference>
<dbReference type="Pfam" id="PF00664">
    <property type="entry name" value="ABC_membrane"/>
    <property type="match status" value="1"/>
</dbReference>
<dbReference type="Pfam" id="PF00005">
    <property type="entry name" value="ABC_tran"/>
    <property type="match status" value="1"/>
</dbReference>
<dbReference type="SMART" id="SM00382">
    <property type="entry name" value="AAA"/>
    <property type="match status" value="1"/>
</dbReference>
<dbReference type="SUPFAM" id="SSF90123">
    <property type="entry name" value="ABC transporter transmembrane region"/>
    <property type="match status" value="1"/>
</dbReference>
<dbReference type="SUPFAM" id="SSF52540">
    <property type="entry name" value="P-loop containing nucleoside triphosphate hydrolases"/>
    <property type="match status" value="1"/>
</dbReference>
<dbReference type="PROSITE" id="PS50929">
    <property type="entry name" value="ABC_TM1F"/>
    <property type="match status" value="1"/>
</dbReference>
<dbReference type="PROSITE" id="PS00211">
    <property type="entry name" value="ABC_TRANSPORTER_1"/>
    <property type="match status" value="1"/>
</dbReference>
<dbReference type="PROSITE" id="PS50893">
    <property type="entry name" value="ABC_TRANSPORTER_2"/>
    <property type="match status" value="1"/>
</dbReference>
<organism evidence="13">
    <name type="scientific">Toxoplasma gondii (strain ATCC 50611 / Me49)</name>
    <dbReference type="NCBI Taxonomy" id="508771"/>
    <lineage>
        <taxon>Eukaryota</taxon>
        <taxon>Sar</taxon>
        <taxon>Alveolata</taxon>
        <taxon>Apicomplexa</taxon>
        <taxon>Conoidasida</taxon>
        <taxon>Coccidia</taxon>
        <taxon>Eucoccidiorida</taxon>
        <taxon>Eimeriorina</taxon>
        <taxon>Sarcocystidae</taxon>
        <taxon>Toxoplasma</taxon>
    </lineage>
</organism>
<protein>
    <recommendedName>
        <fullName evidence="10">ABC transporter ATM1</fullName>
        <shortName evidence="9">TgATM1</shortName>
        <ecNumber evidence="1">7.-.-.-</ecNumber>
    </recommendedName>
    <alternativeName>
        <fullName evidence="8">ABCB7-like</fullName>
        <shortName evidence="8">ABCB7L</shortName>
        <shortName evidence="8">TgABCB7L</shortName>
    </alternativeName>
</protein>
<accession>S8EXU2</accession>
<evidence type="ECO:0000250" key="1">
    <source>
        <dbReference type="UniProtKB" id="Q8IDH9"/>
    </source>
</evidence>
<evidence type="ECO:0000255" key="2"/>
<evidence type="ECO:0000255" key="3">
    <source>
        <dbReference type="PROSITE-ProRule" id="PRU00434"/>
    </source>
</evidence>
<evidence type="ECO:0000255" key="4">
    <source>
        <dbReference type="PROSITE-ProRule" id="PRU00441"/>
    </source>
</evidence>
<evidence type="ECO:0000256" key="5">
    <source>
        <dbReference type="SAM" id="MobiDB-lite"/>
    </source>
</evidence>
<evidence type="ECO:0000269" key="6">
    <source>
    </source>
</evidence>
<evidence type="ECO:0000269" key="7">
    <source>
    </source>
</evidence>
<evidence type="ECO:0000303" key="8">
    <source>
    </source>
</evidence>
<evidence type="ECO:0000303" key="9">
    <source>
    </source>
</evidence>
<evidence type="ECO:0000305" key="10"/>
<evidence type="ECO:0000305" key="11">
    <source>
    </source>
</evidence>
<evidence type="ECO:0000312" key="12">
    <source>
        <dbReference type="EMBL" id="EPT28291.1"/>
    </source>
</evidence>
<evidence type="ECO:0000312" key="13">
    <source>
        <dbReference type="Proteomes" id="UP000001529"/>
    </source>
</evidence>